<feature type="peptide" id="PRO_0000044775" description="Gonadal protein gdl-ORF39">
    <location>
        <begin position="1"/>
        <end position="39"/>
    </location>
</feature>
<protein>
    <recommendedName>
        <fullName>Gonadal protein gdl-ORF39</fullName>
    </recommendedName>
</protein>
<evidence type="ECO:0000269" key="1">
    <source>
    </source>
</evidence>
<evidence type="ECO:0000269" key="2">
    <source>
    </source>
</evidence>
<dbReference type="EMBL" id="X58286">
    <property type="protein sequence ID" value="CAB58350.1"/>
    <property type="molecule type" value="Genomic_DNA"/>
</dbReference>
<dbReference type="EMBL" id="AE014296">
    <property type="protein sequence ID" value="AAO41249.1"/>
    <property type="molecule type" value="Genomic_DNA"/>
</dbReference>
<dbReference type="PIR" id="S22880">
    <property type="entry name" value="S22880"/>
</dbReference>
<dbReference type="RefSeq" id="NP_001027126.1">
    <property type="nucleotide sequence ID" value="NM_001031955.2"/>
</dbReference>
<dbReference type="SMR" id="Q9U5V6"/>
<dbReference type="PaxDb" id="7227-FBpp0075306"/>
<dbReference type="EnsemblMetazoa" id="FBtr0091756">
    <property type="protein sequence ID" value="FBpp0075306"/>
    <property type="gene ID" value="FBgn0028377"/>
</dbReference>
<dbReference type="GeneID" id="3771892"/>
<dbReference type="KEGG" id="dme:Dmel_CG33755"/>
<dbReference type="UCSC" id="CG33755-RA">
    <property type="organism name" value="d. melanogaster"/>
</dbReference>
<dbReference type="AGR" id="FB:FBgn0028377"/>
<dbReference type="CTD" id="3771892"/>
<dbReference type="FlyBase" id="FBgn0028377">
    <property type="gene designation" value="gdl-ORF39"/>
</dbReference>
<dbReference type="VEuPathDB" id="VectorBase:FBgn0028377"/>
<dbReference type="HOGENOM" id="CLU_219859_0_0_1"/>
<dbReference type="InParanoid" id="Q9U5V6"/>
<dbReference type="PhylomeDB" id="Q9U5V6"/>
<dbReference type="BioGRID-ORCS" id="3771892">
    <property type="hits" value="0 hits in 1 CRISPR screen"/>
</dbReference>
<dbReference type="GenomeRNAi" id="3771892"/>
<dbReference type="PRO" id="PR:Q9U5V6"/>
<dbReference type="Proteomes" id="UP000000803">
    <property type="component" value="Chromosome 3L"/>
</dbReference>
<dbReference type="Bgee" id="FBgn0028377">
    <property type="expression patterns" value="Expressed in imaginal disc and 8 other cell types or tissues"/>
</dbReference>
<keyword id="KW-1185">Reference proteome</keyword>
<sequence length="39" mass="4203">MWAAKLIVVTLLLLQFAALALSCSCGEEAKLECGCTKHH</sequence>
<organism>
    <name type="scientific">Drosophila melanogaster</name>
    <name type="common">Fruit fly</name>
    <dbReference type="NCBI Taxonomy" id="7227"/>
    <lineage>
        <taxon>Eukaryota</taxon>
        <taxon>Metazoa</taxon>
        <taxon>Ecdysozoa</taxon>
        <taxon>Arthropoda</taxon>
        <taxon>Hexapoda</taxon>
        <taxon>Insecta</taxon>
        <taxon>Pterygota</taxon>
        <taxon>Neoptera</taxon>
        <taxon>Endopterygota</taxon>
        <taxon>Diptera</taxon>
        <taxon>Brachycera</taxon>
        <taxon>Muscomorpha</taxon>
        <taxon>Ephydroidea</taxon>
        <taxon>Drosophilidae</taxon>
        <taxon>Drosophila</taxon>
        <taxon>Sophophora</taxon>
    </lineage>
</organism>
<comment type="tissue specificity">
    <text evidence="1 2">In bundles of maturing sperm of larval, pupal and adult males.</text>
</comment>
<comment type="developmental stage">
    <text evidence="1 2">During spermatogenesis.</text>
</comment>
<gene>
    <name type="primary">gdl-ORF39</name>
    <name type="ORF">CG33755</name>
</gene>
<accession>Q9U5V6</accession>
<proteinExistence type="evidence at transcript level"/>
<reference key="1">
    <citation type="journal article" date="1989" name="Genes Dev.">
        <title>Overlapping genes of Drosophila melanogaster: organization of the z600-gonadal-Eip28/29 gene cluster.</title>
        <authorList>
            <person name="Schulz R.A."/>
            <person name="Butler B.A."/>
        </authorList>
    </citation>
    <scope>NUCLEOTIDE SEQUENCE [GENOMIC DNA]</scope>
    <scope>TISSUE SPECIFICITY</scope>
    <scope>DEVELOPMENTAL STAGE</scope>
    <source>
        <tissue>Embryo</tissue>
        <tissue>Ovary</tissue>
        <tissue>Testis</tissue>
    </source>
</reference>
<reference key="2">
    <citation type="journal article" date="2000" name="Science">
        <title>The genome sequence of Drosophila melanogaster.</title>
        <authorList>
            <person name="Adams M.D."/>
            <person name="Celniker S.E."/>
            <person name="Holt R.A."/>
            <person name="Evans C.A."/>
            <person name="Gocayne J.D."/>
            <person name="Amanatides P.G."/>
            <person name="Scherer S.E."/>
            <person name="Li P.W."/>
            <person name="Hoskins R.A."/>
            <person name="Galle R.F."/>
            <person name="George R.A."/>
            <person name="Lewis S.E."/>
            <person name="Richards S."/>
            <person name="Ashburner M."/>
            <person name="Henderson S.N."/>
            <person name="Sutton G.G."/>
            <person name="Wortman J.R."/>
            <person name="Yandell M.D."/>
            <person name="Zhang Q."/>
            <person name="Chen L.X."/>
            <person name="Brandon R.C."/>
            <person name="Rogers Y.-H.C."/>
            <person name="Blazej R.G."/>
            <person name="Champe M."/>
            <person name="Pfeiffer B.D."/>
            <person name="Wan K.H."/>
            <person name="Doyle C."/>
            <person name="Baxter E.G."/>
            <person name="Helt G."/>
            <person name="Nelson C.R."/>
            <person name="Miklos G.L.G."/>
            <person name="Abril J.F."/>
            <person name="Agbayani A."/>
            <person name="An H.-J."/>
            <person name="Andrews-Pfannkoch C."/>
            <person name="Baldwin D."/>
            <person name="Ballew R.M."/>
            <person name="Basu A."/>
            <person name="Baxendale J."/>
            <person name="Bayraktaroglu L."/>
            <person name="Beasley E.M."/>
            <person name="Beeson K.Y."/>
            <person name="Benos P.V."/>
            <person name="Berman B.P."/>
            <person name="Bhandari D."/>
            <person name="Bolshakov S."/>
            <person name="Borkova D."/>
            <person name="Botchan M.R."/>
            <person name="Bouck J."/>
            <person name="Brokstein P."/>
            <person name="Brottier P."/>
            <person name="Burtis K.C."/>
            <person name="Busam D.A."/>
            <person name="Butler H."/>
            <person name="Cadieu E."/>
            <person name="Center A."/>
            <person name="Chandra I."/>
            <person name="Cherry J.M."/>
            <person name="Cawley S."/>
            <person name="Dahlke C."/>
            <person name="Davenport L.B."/>
            <person name="Davies P."/>
            <person name="de Pablos B."/>
            <person name="Delcher A."/>
            <person name="Deng Z."/>
            <person name="Mays A.D."/>
            <person name="Dew I."/>
            <person name="Dietz S.M."/>
            <person name="Dodson K."/>
            <person name="Doup L.E."/>
            <person name="Downes M."/>
            <person name="Dugan-Rocha S."/>
            <person name="Dunkov B.C."/>
            <person name="Dunn P."/>
            <person name="Durbin K.J."/>
            <person name="Evangelista C.C."/>
            <person name="Ferraz C."/>
            <person name="Ferriera S."/>
            <person name="Fleischmann W."/>
            <person name="Fosler C."/>
            <person name="Gabrielian A.E."/>
            <person name="Garg N.S."/>
            <person name="Gelbart W.M."/>
            <person name="Glasser K."/>
            <person name="Glodek A."/>
            <person name="Gong F."/>
            <person name="Gorrell J.H."/>
            <person name="Gu Z."/>
            <person name="Guan P."/>
            <person name="Harris M."/>
            <person name="Harris N.L."/>
            <person name="Harvey D.A."/>
            <person name="Heiman T.J."/>
            <person name="Hernandez J.R."/>
            <person name="Houck J."/>
            <person name="Hostin D."/>
            <person name="Houston K.A."/>
            <person name="Howland T.J."/>
            <person name="Wei M.-H."/>
            <person name="Ibegwam C."/>
            <person name="Jalali M."/>
            <person name="Kalush F."/>
            <person name="Karpen G.H."/>
            <person name="Ke Z."/>
            <person name="Kennison J.A."/>
            <person name="Ketchum K.A."/>
            <person name="Kimmel B.E."/>
            <person name="Kodira C.D."/>
            <person name="Kraft C.L."/>
            <person name="Kravitz S."/>
            <person name="Kulp D."/>
            <person name="Lai Z."/>
            <person name="Lasko P."/>
            <person name="Lei Y."/>
            <person name="Levitsky A.A."/>
            <person name="Li J.H."/>
            <person name="Li Z."/>
            <person name="Liang Y."/>
            <person name="Lin X."/>
            <person name="Liu X."/>
            <person name="Mattei B."/>
            <person name="McIntosh T.C."/>
            <person name="McLeod M.P."/>
            <person name="McPherson D."/>
            <person name="Merkulov G."/>
            <person name="Milshina N.V."/>
            <person name="Mobarry C."/>
            <person name="Morris J."/>
            <person name="Moshrefi A."/>
            <person name="Mount S.M."/>
            <person name="Moy M."/>
            <person name="Murphy B."/>
            <person name="Murphy L."/>
            <person name="Muzny D.M."/>
            <person name="Nelson D.L."/>
            <person name="Nelson D.R."/>
            <person name="Nelson K.A."/>
            <person name="Nixon K."/>
            <person name="Nusskern D.R."/>
            <person name="Pacleb J.M."/>
            <person name="Palazzolo M."/>
            <person name="Pittman G.S."/>
            <person name="Pan S."/>
            <person name="Pollard J."/>
            <person name="Puri V."/>
            <person name="Reese M.G."/>
            <person name="Reinert K."/>
            <person name="Remington K."/>
            <person name="Saunders R.D.C."/>
            <person name="Scheeler F."/>
            <person name="Shen H."/>
            <person name="Shue B.C."/>
            <person name="Siden-Kiamos I."/>
            <person name="Simpson M."/>
            <person name="Skupski M.P."/>
            <person name="Smith T.J."/>
            <person name="Spier E."/>
            <person name="Spradling A.C."/>
            <person name="Stapleton M."/>
            <person name="Strong R."/>
            <person name="Sun E."/>
            <person name="Svirskas R."/>
            <person name="Tector C."/>
            <person name="Turner R."/>
            <person name="Venter E."/>
            <person name="Wang A.H."/>
            <person name="Wang X."/>
            <person name="Wang Z.-Y."/>
            <person name="Wassarman D.A."/>
            <person name="Weinstock G.M."/>
            <person name="Weissenbach J."/>
            <person name="Williams S.M."/>
            <person name="Woodage T."/>
            <person name="Worley K.C."/>
            <person name="Wu D."/>
            <person name="Yang S."/>
            <person name="Yao Q.A."/>
            <person name="Ye J."/>
            <person name="Yeh R.-F."/>
            <person name="Zaveri J.S."/>
            <person name="Zhan M."/>
            <person name="Zhang G."/>
            <person name="Zhao Q."/>
            <person name="Zheng L."/>
            <person name="Zheng X.H."/>
            <person name="Zhong F.N."/>
            <person name="Zhong W."/>
            <person name="Zhou X."/>
            <person name="Zhu S.C."/>
            <person name="Zhu X."/>
            <person name="Smith H.O."/>
            <person name="Gibbs R.A."/>
            <person name="Myers E.W."/>
            <person name="Rubin G.M."/>
            <person name="Venter J.C."/>
        </authorList>
    </citation>
    <scope>NUCLEOTIDE SEQUENCE [LARGE SCALE GENOMIC DNA]</scope>
    <source>
        <strain>Berkeley</strain>
    </source>
</reference>
<reference key="3">
    <citation type="journal article" date="2002" name="Genome Biol.">
        <title>Annotation of the Drosophila melanogaster euchromatic genome: a systematic review.</title>
        <authorList>
            <person name="Misra S."/>
            <person name="Crosby M.A."/>
            <person name="Mungall C.J."/>
            <person name="Matthews B.B."/>
            <person name="Campbell K.S."/>
            <person name="Hradecky P."/>
            <person name="Huang Y."/>
            <person name="Kaminker J.S."/>
            <person name="Millburn G.H."/>
            <person name="Prochnik S.E."/>
            <person name="Smith C.D."/>
            <person name="Tupy J.L."/>
            <person name="Whitfield E.J."/>
            <person name="Bayraktaroglu L."/>
            <person name="Berman B.P."/>
            <person name="Bettencourt B.R."/>
            <person name="Celniker S.E."/>
            <person name="de Grey A.D.N.J."/>
            <person name="Drysdale R.A."/>
            <person name="Harris N.L."/>
            <person name="Richter J."/>
            <person name="Russo S."/>
            <person name="Schroeder A.J."/>
            <person name="Shu S.Q."/>
            <person name="Stapleton M."/>
            <person name="Yamada C."/>
            <person name="Ashburner M."/>
            <person name="Gelbart W.M."/>
            <person name="Rubin G.M."/>
            <person name="Lewis S.E."/>
        </authorList>
    </citation>
    <scope>GENOME REANNOTATION</scope>
    <source>
        <strain>Berkeley</strain>
    </source>
</reference>
<reference key="4">
    <citation type="journal article" date="1990" name="Development">
        <title>Expression of the Drosophila gonadal gene: alternative promoters control the germ-line expression of monocistronic and bicistronic gene transcripts.</title>
        <authorList>
            <person name="Schulz R.A."/>
            <person name="Miksch J.L."/>
            <person name="Xie X.L."/>
            <person name="Cornish J.A."/>
            <person name="Galewsky S."/>
        </authorList>
    </citation>
    <scope>TISSUE SPECIFICITY</scope>
    <scope>DEVELOPMENTAL STAGE</scope>
</reference>
<name>GDLO_DROME</name>